<comment type="function">
    <text evidence="1 2">RNA-binding protein which binds to intronic polypyrimidine tracts and mediates negative regulation of exons splicing. May antagonize in a tissue-specific manner the ability of NOVA1 to activate exon selection. In addition to its function in pre-mRNA splicing, plays also a role in the regulation of translation.</text>
</comment>
<comment type="subunit">
    <text evidence="1 2">Monomer. Interacts with NOVA1; the interaction is direct. Identified in a mRNP complex, at least composed of DHX9, DDX3X, ELAVL1, HNRNPU, IGF2BP1, ILF3, PABPC1, PCBP2, PTBP2, STAU1, STAU2, SYNCRIP and YBX1. Part of a ternary complex containing KHSRP and HNRPH1 (By similarity). Interacts with NOVA2; the interaction is direct (By similarity).</text>
</comment>
<comment type="subcellular location">
    <subcellularLocation>
        <location evidence="1">Nucleus</location>
    </subcellularLocation>
</comment>
<comment type="alternative products">
    <event type="alternative splicing"/>
    <isoform>
        <id>Q66H20-1</id>
        <name>1</name>
        <sequence type="displayed"/>
    </isoform>
    <isoform>
        <id>Q66H20-2</id>
        <name>2</name>
        <sequence type="described" ref="VSP_018020"/>
    </isoform>
</comment>
<proteinExistence type="evidence at protein level"/>
<organism>
    <name type="scientific">Rattus norvegicus</name>
    <name type="common">Rat</name>
    <dbReference type="NCBI Taxonomy" id="10116"/>
    <lineage>
        <taxon>Eukaryota</taxon>
        <taxon>Metazoa</taxon>
        <taxon>Chordata</taxon>
        <taxon>Craniata</taxon>
        <taxon>Vertebrata</taxon>
        <taxon>Euteleostomi</taxon>
        <taxon>Mammalia</taxon>
        <taxon>Eutheria</taxon>
        <taxon>Euarchontoglires</taxon>
        <taxon>Glires</taxon>
        <taxon>Rodentia</taxon>
        <taxon>Myomorpha</taxon>
        <taxon>Muroidea</taxon>
        <taxon>Muridae</taxon>
        <taxon>Murinae</taxon>
        <taxon>Rattus</taxon>
    </lineage>
</organism>
<accession>Q66H20</accession>
<accession>Q78ZE9</accession>
<accession>Q7TNW8</accession>
<reference key="1">
    <citation type="journal article" date="2001" name="J. Neuroimmunol.">
        <title>Molecular cloning and characterization of human PTB-like protein: a possible retinal autoantigen of cancer-associated retinopathy.</title>
        <authorList>
            <person name="Tateiwa H."/>
            <person name="Gotoh N."/>
            <person name="Ichikawa M."/>
            <person name="Kikuchi T."/>
            <person name="Yoshimura N."/>
        </authorList>
    </citation>
    <scope>NUCLEOTIDE SEQUENCE [MRNA] (ISOFORM 2)</scope>
    <source>
        <strain>Sprague-Dawley</strain>
        <tissue>Retina</tissue>
    </source>
</reference>
<reference key="2">
    <citation type="journal article" date="2004" name="Genome Res.">
        <title>The status, quality, and expansion of the NIH full-length cDNA project: the Mammalian Gene Collection (MGC).</title>
        <authorList>
            <consortium name="The MGC Project Team"/>
        </authorList>
    </citation>
    <scope>NUCLEOTIDE SEQUENCE [LARGE SCALE MRNA] (ISOFORM 1)</scope>
    <source>
        <strain>Brown Norway</strain>
        <tissue>Testis</tissue>
    </source>
</reference>
<reference key="3">
    <citation type="journal article" date="2004" name="Genomics">
        <title>Evolutionary conservation of a 2-kb intronic sequence flanking a tissue-specific alternative exon in the PTBP2 gene.</title>
        <authorList>
            <person name="Rahman L."/>
            <person name="Bliskovski V."/>
            <person name="Kaye F.J."/>
            <person name="Zajac-Kaye M."/>
        </authorList>
    </citation>
    <scope>NUCLEOTIDE SEQUENCE [GENOMIC DNA] OF 344-361</scope>
    <source>
        <strain>Sprague-Dawley</strain>
        <tissue>Kidney</tissue>
    </source>
</reference>
<reference key="4">
    <citation type="journal article" date="2012" name="Nat. Commun.">
        <title>Quantitative maps of protein phosphorylation sites across 14 different rat organs and tissues.</title>
        <authorList>
            <person name="Lundby A."/>
            <person name="Secher A."/>
            <person name="Lage K."/>
            <person name="Nordsborg N.B."/>
            <person name="Dmytriyev A."/>
            <person name="Lundby C."/>
            <person name="Olsen J.V."/>
        </authorList>
    </citation>
    <scope>PHOSPHORYLATION [LARGE SCALE ANALYSIS] AT SER-308</scope>
    <scope>IDENTIFICATION BY MASS SPECTROMETRY [LARGE SCALE ANALYSIS]</scope>
</reference>
<evidence type="ECO:0000250" key="1">
    <source>
        <dbReference type="UniProtKB" id="Q91Z31"/>
    </source>
</evidence>
<evidence type="ECO:0000250" key="2">
    <source>
        <dbReference type="UniProtKB" id="Q9UKA9"/>
    </source>
</evidence>
<evidence type="ECO:0000255" key="3">
    <source>
        <dbReference type="PROSITE-ProRule" id="PRU00176"/>
    </source>
</evidence>
<evidence type="ECO:0000303" key="4">
    <source>
    </source>
</evidence>
<evidence type="ECO:0000305" key="5"/>
<evidence type="ECO:0000312" key="6">
    <source>
        <dbReference type="RGD" id="1359267"/>
    </source>
</evidence>
<evidence type="ECO:0007744" key="7">
    <source>
    </source>
</evidence>
<dbReference type="EMBL" id="AJ010585">
    <property type="protein sequence ID" value="CAB54073.1"/>
    <property type="molecule type" value="mRNA"/>
</dbReference>
<dbReference type="EMBL" id="BC082076">
    <property type="protein sequence ID" value="AAH82076.1"/>
    <property type="molecule type" value="mRNA"/>
</dbReference>
<dbReference type="EMBL" id="AY333750">
    <property type="protein sequence ID" value="AAQ01148.1"/>
    <property type="molecule type" value="Genomic_DNA"/>
</dbReference>
<dbReference type="RefSeq" id="NP_001005555.1">
    <molecule id="Q66H20-1"/>
    <property type="nucleotide sequence ID" value="NM_001005555.1"/>
</dbReference>
<dbReference type="RefSeq" id="XP_006233300.1">
    <molecule id="Q66H20-2"/>
    <property type="nucleotide sequence ID" value="XM_006233238.5"/>
</dbReference>
<dbReference type="BMRB" id="Q66H20"/>
<dbReference type="SMR" id="Q66H20"/>
<dbReference type="FunCoup" id="Q66H20">
    <property type="interactions" value="4033"/>
</dbReference>
<dbReference type="STRING" id="10116.ENSRNOP00000015036"/>
<dbReference type="GlyGen" id="Q66H20">
    <property type="glycosylation" value="2 sites"/>
</dbReference>
<dbReference type="iPTMnet" id="Q66H20"/>
<dbReference type="PhosphoSitePlus" id="Q66H20"/>
<dbReference type="jPOST" id="Q66H20"/>
<dbReference type="PaxDb" id="10116-ENSRNOP00000015036"/>
<dbReference type="Ensembl" id="ENSRNOT00000104266.1">
    <molecule id="Q66H20-2"/>
    <property type="protein sequence ID" value="ENSRNOP00000091829.1"/>
    <property type="gene ID" value="ENSRNOG00000010827.8"/>
</dbReference>
<dbReference type="GeneID" id="310820"/>
<dbReference type="KEGG" id="rno:310820"/>
<dbReference type="UCSC" id="RGD:1359267">
    <molecule id="Q66H20-1"/>
    <property type="organism name" value="rat"/>
</dbReference>
<dbReference type="AGR" id="RGD:1359267"/>
<dbReference type="CTD" id="58155"/>
<dbReference type="RGD" id="1359267">
    <property type="gene designation" value="Ptbp2"/>
</dbReference>
<dbReference type="VEuPathDB" id="HostDB:ENSRNOG00000010827"/>
<dbReference type="eggNOG" id="KOG1190">
    <property type="taxonomic scope" value="Eukaryota"/>
</dbReference>
<dbReference type="GeneTree" id="ENSGT01050000244924"/>
<dbReference type="HOGENOM" id="CLU_015171_7_0_1"/>
<dbReference type="InParanoid" id="Q66H20"/>
<dbReference type="PhylomeDB" id="Q66H20"/>
<dbReference type="TreeFam" id="TF319824"/>
<dbReference type="PRO" id="PR:Q66H20"/>
<dbReference type="Proteomes" id="UP000002494">
    <property type="component" value="Chromosome 2"/>
</dbReference>
<dbReference type="Bgee" id="ENSRNOG00000010827">
    <property type="expression patterns" value="Expressed in cerebellum and 19 other cell types or tissues"/>
</dbReference>
<dbReference type="GO" id="GO:0030426">
    <property type="term" value="C:growth cone"/>
    <property type="evidence" value="ECO:0000314"/>
    <property type="project" value="RGD"/>
</dbReference>
<dbReference type="GO" id="GO:0043025">
    <property type="term" value="C:neuronal cell body"/>
    <property type="evidence" value="ECO:0000314"/>
    <property type="project" value="RGD"/>
</dbReference>
<dbReference type="GO" id="GO:0005634">
    <property type="term" value="C:nucleus"/>
    <property type="evidence" value="ECO:0000318"/>
    <property type="project" value="GO_Central"/>
</dbReference>
<dbReference type="GO" id="GO:0005681">
    <property type="term" value="C:spliceosomal complex"/>
    <property type="evidence" value="ECO:0000266"/>
    <property type="project" value="RGD"/>
</dbReference>
<dbReference type="GO" id="GO:0003729">
    <property type="term" value="F:mRNA binding"/>
    <property type="evidence" value="ECO:0000266"/>
    <property type="project" value="RGD"/>
</dbReference>
<dbReference type="GO" id="GO:0021549">
    <property type="term" value="P:cerebellum development"/>
    <property type="evidence" value="ECO:0000270"/>
    <property type="project" value="RGD"/>
</dbReference>
<dbReference type="GO" id="GO:0006376">
    <property type="term" value="P:mRNA splice site recognition"/>
    <property type="evidence" value="ECO:0000266"/>
    <property type="project" value="RGD"/>
</dbReference>
<dbReference type="GO" id="GO:0033119">
    <property type="term" value="P:negative regulation of RNA splicing"/>
    <property type="evidence" value="ECO:0000315"/>
    <property type="project" value="RGD"/>
</dbReference>
<dbReference type="GO" id="GO:2000177">
    <property type="term" value="P:regulation of neural precursor cell proliferation"/>
    <property type="evidence" value="ECO:0000266"/>
    <property type="project" value="RGD"/>
</dbReference>
<dbReference type="GO" id="GO:0043484">
    <property type="term" value="P:regulation of RNA splicing"/>
    <property type="evidence" value="ECO:0000318"/>
    <property type="project" value="GO_Central"/>
</dbReference>
<dbReference type="GO" id="GO:0021510">
    <property type="term" value="P:spinal cord development"/>
    <property type="evidence" value="ECO:0000270"/>
    <property type="project" value="RGD"/>
</dbReference>
<dbReference type="CDD" id="cd12778">
    <property type="entry name" value="RRM1_PTBP2"/>
    <property type="match status" value="1"/>
</dbReference>
<dbReference type="CDD" id="cd12783">
    <property type="entry name" value="RRM2_PTBP2"/>
    <property type="match status" value="1"/>
</dbReference>
<dbReference type="CDD" id="cd12696">
    <property type="entry name" value="RRM3_PTBP2"/>
    <property type="match status" value="1"/>
</dbReference>
<dbReference type="CDD" id="cd12702">
    <property type="entry name" value="RRM4_PTBP2"/>
    <property type="match status" value="1"/>
</dbReference>
<dbReference type="FunFam" id="3.30.70.330:FF:000036">
    <property type="entry name" value="polypyrimidine tract-binding protein 1 isoform X2"/>
    <property type="match status" value="1"/>
</dbReference>
<dbReference type="FunFam" id="3.30.70.330:FF:000018">
    <property type="entry name" value="Polypyrimidine tract-binding protein 2 isoform 1"/>
    <property type="match status" value="1"/>
</dbReference>
<dbReference type="FunFam" id="3.30.70.330:FF:000032">
    <property type="entry name" value="Polypyrimidine tract-binding protein 2 isoform 1"/>
    <property type="match status" value="1"/>
</dbReference>
<dbReference type="FunFam" id="3.30.70.330:FF:000173">
    <property type="entry name" value="polypyrimidine tract-binding protein 2 isoform X2"/>
    <property type="match status" value="1"/>
</dbReference>
<dbReference type="Gene3D" id="3.30.70.330">
    <property type="match status" value="4"/>
</dbReference>
<dbReference type="InterPro" id="IPR006536">
    <property type="entry name" value="HnRNP-L/PTB"/>
</dbReference>
<dbReference type="InterPro" id="IPR012677">
    <property type="entry name" value="Nucleotide-bd_a/b_plait_sf"/>
</dbReference>
<dbReference type="InterPro" id="IPR021790">
    <property type="entry name" value="PTBP1-like_RRM2"/>
</dbReference>
<dbReference type="InterPro" id="IPR035002">
    <property type="entry name" value="PTBP2_RRM1"/>
</dbReference>
<dbReference type="InterPro" id="IPR034799">
    <property type="entry name" value="PTBP2_RRM3"/>
</dbReference>
<dbReference type="InterPro" id="IPR034800">
    <property type="entry name" value="PTBP2_RRM4"/>
</dbReference>
<dbReference type="InterPro" id="IPR035979">
    <property type="entry name" value="RBD_domain_sf"/>
</dbReference>
<dbReference type="InterPro" id="IPR000504">
    <property type="entry name" value="RRM_dom"/>
</dbReference>
<dbReference type="NCBIfam" id="TIGR01649">
    <property type="entry name" value="hnRNP-L_PTB"/>
    <property type="match status" value="1"/>
</dbReference>
<dbReference type="PANTHER" id="PTHR15592">
    <property type="entry name" value="MATRIN 3/NUCLEAR PROTEIN 220-RELATED"/>
    <property type="match status" value="1"/>
</dbReference>
<dbReference type="Pfam" id="PF00076">
    <property type="entry name" value="RRM_1"/>
    <property type="match status" value="1"/>
</dbReference>
<dbReference type="Pfam" id="PF13893">
    <property type="entry name" value="RRM_5"/>
    <property type="match status" value="1"/>
</dbReference>
<dbReference type="Pfam" id="PF11835">
    <property type="entry name" value="RRM_8"/>
    <property type="match status" value="1"/>
</dbReference>
<dbReference type="SMART" id="SM00360">
    <property type="entry name" value="RRM"/>
    <property type="match status" value="4"/>
</dbReference>
<dbReference type="SUPFAM" id="SSF54928">
    <property type="entry name" value="RNA-binding domain, RBD"/>
    <property type="match status" value="4"/>
</dbReference>
<dbReference type="PROSITE" id="PS50102">
    <property type="entry name" value="RRM"/>
    <property type="match status" value="4"/>
</dbReference>
<name>PTBP2_RAT</name>
<gene>
    <name evidence="6" type="primary">Ptbp2</name>
    <name type="synonym">Nptb</name>
    <name type="synonym">Ptblp</name>
</gene>
<keyword id="KW-0007">Acetylation</keyword>
<keyword id="KW-0025">Alternative splicing</keyword>
<keyword id="KW-0507">mRNA processing</keyword>
<keyword id="KW-0508">mRNA splicing</keyword>
<keyword id="KW-0539">Nucleus</keyword>
<keyword id="KW-0597">Phosphoprotein</keyword>
<keyword id="KW-1185">Reference proteome</keyword>
<keyword id="KW-0677">Repeat</keyword>
<keyword id="KW-0694">RNA-binding</keyword>
<protein>
    <recommendedName>
        <fullName evidence="5">Polypyrimidine tract-binding protein 2</fullName>
    </recommendedName>
    <alternativeName>
        <fullName>Neural polypyrimidine tract-binding protein</fullName>
    </alternativeName>
    <alternativeName>
        <fullName>PTB-like protein</fullName>
    </alternativeName>
</protein>
<sequence>MDGIVTEVAVGVKRGSDELLSGSVLSSPNSNMSGMVVTANGNDSKKFKGEDKMDGAPSRVLHIRKLPGEVTETEVIALGLPFGKVTNILMLKGKNQAFLELATEEAAITMVNYYSAVTPHLRNQPIYIQYSNHKELKTDNTLNQRAQVVLQAVTAVQTANTPLSGTTVSESAVTPAQSPVLRIIIDNMYYPVTLDVLHQIFSKFGAVLKIITFTKNNQFQALLQYGDPVNAQQAKLALDGQNIYNACCTLRIDFSKLVNLNVKYNNDKSRDYTRPDLPSGDGQPALDPAIAAAFAKETSLLAVPGALSPLAIPNAAAAAAAAAAGRVGMPGVSAGGNTVLLVSNLNEEMVTPQSLFTLFGVYGDVQRVKILYNKKDSALIQMADGNQSQLAMNHLNGQKMYGKIIRVTLSKHQTVQLPREGLDDQGLTKDFGNSPLHRFKKPGSKNFQNIFPPSATLHLSNIPPSVAEEDLRTLFANTGGTVKAFKFFQDHKMALLQMATVEEAIQALIDLHNYNLGENHHLRVSFSKSTI</sequence>
<feature type="chain" id="PRO_0000232930" description="Polypyrimidine tract-binding protein 2">
    <location>
        <begin position="1"/>
        <end position="531"/>
    </location>
</feature>
<feature type="domain" description="RRM 1" evidence="3">
    <location>
        <begin position="59"/>
        <end position="133"/>
    </location>
</feature>
<feature type="domain" description="RRM 2" evidence="3">
    <location>
        <begin position="181"/>
        <end position="257"/>
    </location>
</feature>
<feature type="domain" description="RRM 3" evidence="3">
    <location>
        <begin position="338"/>
        <end position="412"/>
    </location>
</feature>
<feature type="domain" description="RRM 4" evidence="3">
    <location>
        <begin position="455"/>
        <end position="529"/>
    </location>
</feature>
<feature type="modified residue" description="N-acetylmethionine" evidence="2">
    <location>
        <position position="1"/>
    </location>
</feature>
<feature type="modified residue" description="Phosphoserine" evidence="1">
    <location>
        <position position="26"/>
    </location>
</feature>
<feature type="modified residue" description="Phosphoserine" evidence="1">
    <location>
        <position position="27"/>
    </location>
</feature>
<feature type="modified residue" description="Phosphoserine" evidence="7">
    <location>
        <position position="308"/>
    </location>
</feature>
<feature type="splice variant" id="VSP_018020" description="In isoform 2." evidence="4">
    <original>Q</original>
    <variation>QR</variation>
    <location>
        <position position="489"/>
    </location>
</feature>